<accession>Q9CNB2</accession>
<name>RL13_PASMU</name>
<comment type="function">
    <text evidence="1">This protein is one of the early assembly proteins of the 50S ribosomal subunit, although it is not seen to bind rRNA by itself. It is important during the early stages of 50S assembly.</text>
</comment>
<comment type="subunit">
    <text evidence="1">Part of the 50S ribosomal subunit.</text>
</comment>
<comment type="similarity">
    <text evidence="1">Belongs to the universal ribosomal protein uL13 family.</text>
</comment>
<organism>
    <name type="scientific">Pasteurella multocida (strain Pm70)</name>
    <dbReference type="NCBI Taxonomy" id="272843"/>
    <lineage>
        <taxon>Bacteria</taxon>
        <taxon>Pseudomonadati</taxon>
        <taxon>Pseudomonadota</taxon>
        <taxon>Gammaproteobacteria</taxon>
        <taxon>Pasteurellales</taxon>
        <taxon>Pasteurellaceae</taxon>
        <taxon>Pasteurella</taxon>
    </lineage>
</organism>
<keyword id="KW-1185">Reference proteome</keyword>
<keyword id="KW-0687">Ribonucleoprotein</keyword>
<keyword id="KW-0689">Ribosomal protein</keyword>
<gene>
    <name evidence="1" type="primary">rplM</name>
    <name type="ordered locus">PM0520</name>
</gene>
<sequence>MKTFVAKPETVKRDWYVVDATGKTLGRLATELARRLRGKHKAEYTPHVDTGDYIIVINAEKVAVTGNKESDKLYHWHTGYVGGIKQATFKEMIARRPEAVIEIAVKGMLPKGPLGRAMYRKLKVYAGSEHNHAAQQPQVLDI</sequence>
<feature type="chain" id="PRO_0000261761" description="Large ribosomal subunit protein uL13">
    <location>
        <begin position="1"/>
        <end position="142"/>
    </location>
</feature>
<dbReference type="EMBL" id="AE004439">
    <property type="protein sequence ID" value="AAK02604.1"/>
    <property type="molecule type" value="Genomic_DNA"/>
</dbReference>
<dbReference type="RefSeq" id="WP_005726289.1">
    <property type="nucleotide sequence ID" value="NC_002663.1"/>
</dbReference>
<dbReference type="SMR" id="Q9CNB2"/>
<dbReference type="STRING" id="272843.PM0520"/>
<dbReference type="EnsemblBacteria" id="AAK02604">
    <property type="protein sequence ID" value="AAK02604"/>
    <property type="gene ID" value="PM0520"/>
</dbReference>
<dbReference type="GeneID" id="77208134"/>
<dbReference type="KEGG" id="pmu:PM0520"/>
<dbReference type="HOGENOM" id="CLU_082184_2_2_6"/>
<dbReference type="OrthoDB" id="9801330at2"/>
<dbReference type="Proteomes" id="UP000000809">
    <property type="component" value="Chromosome"/>
</dbReference>
<dbReference type="GO" id="GO:0022625">
    <property type="term" value="C:cytosolic large ribosomal subunit"/>
    <property type="evidence" value="ECO:0007669"/>
    <property type="project" value="TreeGrafter"/>
</dbReference>
<dbReference type="GO" id="GO:0003729">
    <property type="term" value="F:mRNA binding"/>
    <property type="evidence" value="ECO:0007669"/>
    <property type="project" value="TreeGrafter"/>
</dbReference>
<dbReference type="GO" id="GO:0003735">
    <property type="term" value="F:structural constituent of ribosome"/>
    <property type="evidence" value="ECO:0007669"/>
    <property type="project" value="InterPro"/>
</dbReference>
<dbReference type="GO" id="GO:0017148">
    <property type="term" value="P:negative regulation of translation"/>
    <property type="evidence" value="ECO:0007669"/>
    <property type="project" value="TreeGrafter"/>
</dbReference>
<dbReference type="GO" id="GO:0006412">
    <property type="term" value="P:translation"/>
    <property type="evidence" value="ECO:0007669"/>
    <property type="project" value="UniProtKB-UniRule"/>
</dbReference>
<dbReference type="CDD" id="cd00392">
    <property type="entry name" value="Ribosomal_L13"/>
    <property type="match status" value="1"/>
</dbReference>
<dbReference type="FunFam" id="3.90.1180.10:FF:000001">
    <property type="entry name" value="50S ribosomal protein L13"/>
    <property type="match status" value="1"/>
</dbReference>
<dbReference type="Gene3D" id="3.90.1180.10">
    <property type="entry name" value="Ribosomal protein L13"/>
    <property type="match status" value="1"/>
</dbReference>
<dbReference type="HAMAP" id="MF_01366">
    <property type="entry name" value="Ribosomal_uL13"/>
    <property type="match status" value="1"/>
</dbReference>
<dbReference type="InterPro" id="IPR005822">
    <property type="entry name" value="Ribosomal_uL13"/>
</dbReference>
<dbReference type="InterPro" id="IPR005823">
    <property type="entry name" value="Ribosomal_uL13_bac-type"/>
</dbReference>
<dbReference type="InterPro" id="IPR023563">
    <property type="entry name" value="Ribosomal_uL13_CS"/>
</dbReference>
<dbReference type="InterPro" id="IPR036899">
    <property type="entry name" value="Ribosomal_uL13_sf"/>
</dbReference>
<dbReference type="NCBIfam" id="TIGR01066">
    <property type="entry name" value="rplM_bact"/>
    <property type="match status" value="1"/>
</dbReference>
<dbReference type="PANTHER" id="PTHR11545:SF2">
    <property type="entry name" value="LARGE RIBOSOMAL SUBUNIT PROTEIN UL13M"/>
    <property type="match status" value="1"/>
</dbReference>
<dbReference type="PANTHER" id="PTHR11545">
    <property type="entry name" value="RIBOSOMAL PROTEIN L13"/>
    <property type="match status" value="1"/>
</dbReference>
<dbReference type="Pfam" id="PF00572">
    <property type="entry name" value="Ribosomal_L13"/>
    <property type="match status" value="1"/>
</dbReference>
<dbReference type="PIRSF" id="PIRSF002181">
    <property type="entry name" value="Ribosomal_L13"/>
    <property type="match status" value="1"/>
</dbReference>
<dbReference type="SUPFAM" id="SSF52161">
    <property type="entry name" value="Ribosomal protein L13"/>
    <property type="match status" value="1"/>
</dbReference>
<dbReference type="PROSITE" id="PS00783">
    <property type="entry name" value="RIBOSOMAL_L13"/>
    <property type="match status" value="1"/>
</dbReference>
<proteinExistence type="inferred from homology"/>
<reference key="1">
    <citation type="journal article" date="2001" name="Proc. Natl. Acad. Sci. U.S.A.">
        <title>Complete genomic sequence of Pasteurella multocida Pm70.</title>
        <authorList>
            <person name="May B.J."/>
            <person name="Zhang Q."/>
            <person name="Li L.L."/>
            <person name="Paustian M.L."/>
            <person name="Whittam T.S."/>
            <person name="Kapur V."/>
        </authorList>
    </citation>
    <scope>NUCLEOTIDE SEQUENCE [LARGE SCALE GENOMIC DNA]</scope>
    <source>
        <strain>Pm70</strain>
    </source>
</reference>
<protein>
    <recommendedName>
        <fullName evidence="1">Large ribosomal subunit protein uL13</fullName>
    </recommendedName>
    <alternativeName>
        <fullName evidence="2">50S ribosomal protein L13</fullName>
    </alternativeName>
</protein>
<evidence type="ECO:0000255" key="1">
    <source>
        <dbReference type="HAMAP-Rule" id="MF_01366"/>
    </source>
</evidence>
<evidence type="ECO:0000305" key="2"/>